<reference key="1">
    <citation type="journal article" date="2004" name="Proc. Natl. Acad. Sci. U.S.A.">
        <title>Genome sequence of the deep-sea gamma-proteobacterium Idiomarina loihiensis reveals amino acid fermentation as a source of carbon and energy.</title>
        <authorList>
            <person name="Hou S."/>
            <person name="Saw J.H."/>
            <person name="Lee K.S."/>
            <person name="Freitas T.A."/>
            <person name="Belisle C."/>
            <person name="Kawarabayasi Y."/>
            <person name="Donachie S.P."/>
            <person name="Pikina A."/>
            <person name="Galperin M.Y."/>
            <person name="Koonin E.V."/>
            <person name="Makarova K.S."/>
            <person name="Omelchenko M.V."/>
            <person name="Sorokin A."/>
            <person name="Wolf Y.I."/>
            <person name="Li Q.X."/>
            <person name="Keum Y.S."/>
            <person name="Campbell S."/>
            <person name="Denery J."/>
            <person name="Aizawa S."/>
            <person name="Shibata S."/>
            <person name="Malahoff A."/>
            <person name="Alam M."/>
        </authorList>
    </citation>
    <scope>NUCLEOTIDE SEQUENCE [LARGE SCALE GENOMIC DNA]</scope>
    <source>
        <strain>ATCC BAA-735 / DSM 15497 / L2-TR</strain>
    </source>
</reference>
<comment type="subcellular location">
    <subcellularLocation>
        <location evidence="1">Cytoplasm</location>
    </subcellularLocation>
</comment>
<comment type="similarity">
    <text evidence="1">Belongs to the TACO1 family.</text>
</comment>
<evidence type="ECO:0000255" key="1">
    <source>
        <dbReference type="HAMAP-Rule" id="MF_00693"/>
    </source>
</evidence>
<sequence>MGRAYQNRKDSIAKTANAKSKVYSRYGREIYVCAKQGGGDPDGNLALRGLIDRAKKDQVPAHVIEKAIDKAQGGAGEDFSPARYEGYGPSNCMVIVECLTDNPNRTFGDVRNCFTKSKSKIGAQGSVAHSFDHCAIFAFRHDNEDEVLEAMMEADVDVTDVEFEDGLVTVFAPNTEYAAARQALTHAFPDIDFEADEIQFLPQVTTSIAEDDLPMFERLMDMLNDLDDVQNIYHNAEH</sequence>
<proteinExistence type="inferred from homology"/>
<protein>
    <recommendedName>
        <fullName evidence="1">Probable transcriptional regulatory protein IL0164</fullName>
    </recommendedName>
</protein>
<feature type="chain" id="PRO_0000175822" description="Probable transcriptional regulatory protein IL0164">
    <location>
        <begin position="1"/>
        <end position="238"/>
    </location>
</feature>
<organism>
    <name type="scientific">Idiomarina loihiensis (strain ATCC BAA-735 / DSM 15497 / L2-TR)</name>
    <dbReference type="NCBI Taxonomy" id="283942"/>
    <lineage>
        <taxon>Bacteria</taxon>
        <taxon>Pseudomonadati</taxon>
        <taxon>Pseudomonadota</taxon>
        <taxon>Gammaproteobacteria</taxon>
        <taxon>Alteromonadales</taxon>
        <taxon>Idiomarinaceae</taxon>
        <taxon>Idiomarina</taxon>
    </lineage>
</organism>
<keyword id="KW-0963">Cytoplasm</keyword>
<keyword id="KW-0238">DNA-binding</keyword>
<keyword id="KW-1185">Reference proteome</keyword>
<keyword id="KW-0804">Transcription</keyword>
<keyword id="KW-0805">Transcription regulation</keyword>
<accession>Q5QWI9</accession>
<gene>
    <name type="ordered locus">IL0164</name>
</gene>
<dbReference type="EMBL" id="AE017340">
    <property type="protein sequence ID" value="AAV81007.1"/>
    <property type="molecule type" value="Genomic_DNA"/>
</dbReference>
<dbReference type="RefSeq" id="WP_011233427.1">
    <property type="nucleotide sequence ID" value="NC_006512.1"/>
</dbReference>
<dbReference type="SMR" id="Q5QWI9"/>
<dbReference type="STRING" id="283942.IL0164"/>
<dbReference type="GeneID" id="41335310"/>
<dbReference type="KEGG" id="ilo:IL0164"/>
<dbReference type="eggNOG" id="COG0217">
    <property type="taxonomic scope" value="Bacteria"/>
</dbReference>
<dbReference type="HOGENOM" id="CLU_062974_2_0_6"/>
<dbReference type="OrthoDB" id="9781053at2"/>
<dbReference type="Proteomes" id="UP000001171">
    <property type="component" value="Chromosome"/>
</dbReference>
<dbReference type="GO" id="GO:0005829">
    <property type="term" value="C:cytosol"/>
    <property type="evidence" value="ECO:0007669"/>
    <property type="project" value="TreeGrafter"/>
</dbReference>
<dbReference type="GO" id="GO:0003677">
    <property type="term" value="F:DNA binding"/>
    <property type="evidence" value="ECO:0007669"/>
    <property type="project" value="UniProtKB-UniRule"/>
</dbReference>
<dbReference type="GO" id="GO:0006355">
    <property type="term" value="P:regulation of DNA-templated transcription"/>
    <property type="evidence" value="ECO:0007669"/>
    <property type="project" value="UniProtKB-UniRule"/>
</dbReference>
<dbReference type="FunFam" id="1.10.10.200:FF:000003">
    <property type="entry name" value="Probable transcriptional regulatory protein YeeN"/>
    <property type="match status" value="1"/>
</dbReference>
<dbReference type="Gene3D" id="1.10.10.200">
    <property type="match status" value="1"/>
</dbReference>
<dbReference type="Gene3D" id="3.30.70.980">
    <property type="match status" value="2"/>
</dbReference>
<dbReference type="HAMAP" id="MF_00693">
    <property type="entry name" value="Transcrip_reg_TACO1"/>
    <property type="match status" value="1"/>
</dbReference>
<dbReference type="InterPro" id="IPR017856">
    <property type="entry name" value="Integrase-like_N"/>
</dbReference>
<dbReference type="InterPro" id="IPR048300">
    <property type="entry name" value="TACO1_YebC-like_2nd/3rd_dom"/>
</dbReference>
<dbReference type="InterPro" id="IPR049083">
    <property type="entry name" value="TACO1_YebC_N"/>
</dbReference>
<dbReference type="InterPro" id="IPR002876">
    <property type="entry name" value="Transcrip_reg_TACO1-like"/>
</dbReference>
<dbReference type="InterPro" id="IPR026564">
    <property type="entry name" value="Transcrip_reg_TACO1-like_dom3"/>
</dbReference>
<dbReference type="InterPro" id="IPR029072">
    <property type="entry name" value="YebC-like"/>
</dbReference>
<dbReference type="NCBIfam" id="NF009044">
    <property type="entry name" value="PRK12378.1"/>
    <property type="match status" value="1"/>
</dbReference>
<dbReference type="PANTHER" id="PTHR12532">
    <property type="entry name" value="TRANSLATIONAL ACTIVATOR OF CYTOCHROME C OXIDASE 1"/>
    <property type="match status" value="1"/>
</dbReference>
<dbReference type="PANTHER" id="PTHR12532:SF0">
    <property type="entry name" value="TRANSLATIONAL ACTIVATOR OF CYTOCHROME C OXIDASE 1"/>
    <property type="match status" value="1"/>
</dbReference>
<dbReference type="Pfam" id="PF20772">
    <property type="entry name" value="TACO1_YebC_N"/>
    <property type="match status" value="1"/>
</dbReference>
<dbReference type="Pfam" id="PF01709">
    <property type="entry name" value="Transcrip_reg"/>
    <property type="match status" value="1"/>
</dbReference>
<dbReference type="SUPFAM" id="SSF75625">
    <property type="entry name" value="YebC-like"/>
    <property type="match status" value="1"/>
</dbReference>
<name>Y164_IDILO</name>